<protein>
    <recommendedName>
        <fullName evidence="1">Arginine--tRNA ligase</fullName>
        <ecNumber evidence="1">6.1.1.19</ecNumber>
    </recommendedName>
    <alternativeName>
        <fullName evidence="1">Arginyl-tRNA synthetase</fullName>
        <shortName evidence="1">ArgRS</shortName>
    </alternativeName>
</protein>
<sequence length="563" mass="63472">MNTKELIASELASIIDSLDQEAILKLLETPKNSEMGDIAFPAFSLAKVERKAPQMIAAELAEKMNSQAFEKVVATGPYVNFFLDKSTISAQVLQAVTTEKEHYADQNIGKQENVVIDMSSPNIAKPFSIGHLRSTVIGDSLSHIFQKIGYQTVKVNHLGDWGKQFGMLIVAYKKWGDEEAVKAHPIDELLKLYVRINAEAENDPSLDEEAREWFRKLENGDEEALALWQWFRDESLVEFNRLYNELKVEFDSYNGEAFYNDKMDAVVDILSEKGLLLESEGAQVVNLEKYGIEHPALIKKSDGATLYITRDLAAALYRKNEYQFAKSIYVVGQEQSAHFKQLKAVLQEMGYDWSDDITHVPFGLVTKEGKKLSTRKGNVILLEPTVAEAVSRAKVQIEAKNPELENKDQVAHAVGVGAIKFYDLKTDRTNGYDFDLEAMVSFEGETGPYVQYAYARIQSILRKADFKPETAGNYSLNDTESWEIIKLIQDFPRIINRAADNFEPSIIAKFAISLAQSFNKYYAHTRILDESPERDSRLALSYATAVVLKEALRLLGVEAPEKM</sequence>
<keyword id="KW-0030">Aminoacyl-tRNA synthetase</keyword>
<keyword id="KW-0067">ATP-binding</keyword>
<keyword id="KW-0963">Cytoplasm</keyword>
<keyword id="KW-0436">Ligase</keyword>
<keyword id="KW-0547">Nucleotide-binding</keyword>
<keyword id="KW-0648">Protein biosynthesis</keyword>
<proteinExistence type="inferred from homology"/>
<dbReference type="EC" id="6.1.1.19" evidence="1"/>
<dbReference type="EMBL" id="CP000936">
    <property type="protein sequence ID" value="ACA36681.1"/>
    <property type="molecule type" value="Genomic_DNA"/>
</dbReference>
<dbReference type="RefSeq" id="WP_001092703.1">
    <property type="nucleotide sequence ID" value="NC_010380.1"/>
</dbReference>
<dbReference type="SMR" id="B1I9E7"/>
<dbReference type="KEGG" id="spv:SPH_2266"/>
<dbReference type="HOGENOM" id="CLU_006406_6_1_9"/>
<dbReference type="Proteomes" id="UP000002163">
    <property type="component" value="Chromosome"/>
</dbReference>
<dbReference type="GO" id="GO:0005737">
    <property type="term" value="C:cytoplasm"/>
    <property type="evidence" value="ECO:0007669"/>
    <property type="project" value="UniProtKB-SubCell"/>
</dbReference>
<dbReference type="GO" id="GO:0004814">
    <property type="term" value="F:arginine-tRNA ligase activity"/>
    <property type="evidence" value="ECO:0007669"/>
    <property type="project" value="UniProtKB-UniRule"/>
</dbReference>
<dbReference type="GO" id="GO:0005524">
    <property type="term" value="F:ATP binding"/>
    <property type="evidence" value="ECO:0007669"/>
    <property type="project" value="UniProtKB-UniRule"/>
</dbReference>
<dbReference type="GO" id="GO:0006420">
    <property type="term" value="P:arginyl-tRNA aminoacylation"/>
    <property type="evidence" value="ECO:0007669"/>
    <property type="project" value="UniProtKB-UniRule"/>
</dbReference>
<dbReference type="CDD" id="cd07956">
    <property type="entry name" value="Anticodon_Ia_Arg"/>
    <property type="match status" value="1"/>
</dbReference>
<dbReference type="CDD" id="cd00671">
    <property type="entry name" value="ArgRS_core"/>
    <property type="match status" value="1"/>
</dbReference>
<dbReference type="FunFam" id="1.10.730.10:FF:000034">
    <property type="entry name" value="Arginine--tRNA ligase"/>
    <property type="match status" value="1"/>
</dbReference>
<dbReference type="FunFam" id="3.30.1360.70:FF:000005">
    <property type="entry name" value="Arginine--tRNA ligase"/>
    <property type="match status" value="1"/>
</dbReference>
<dbReference type="FunFam" id="3.40.50.620:FF:000116">
    <property type="entry name" value="Arginine--tRNA ligase"/>
    <property type="match status" value="1"/>
</dbReference>
<dbReference type="Gene3D" id="3.30.1360.70">
    <property type="entry name" value="Arginyl tRNA synthetase N-terminal domain"/>
    <property type="match status" value="1"/>
</dbReference>
<dbReference type="Gene3D" id="3.40.50.620">
    <property type="entry name" value="HUPs"/>
    <property type="match status" value="1"/>
</dbReference>
<dbReference type="Gene3D" id="1.10.730.10">
    <property type="entry name" value="Isoleucyl-tRNA Synthetase, Domain 1"/>
    <property type="match status" value="1"/>
</dbReference>
<dbReference type="HAMAP" id="MF_00123">
    <property type="entry name" value="Arg_tRNA_synth"/>
    <property type="match status" value="1"/>
</dbReference>
<dbReference type="InterPro" id="IPR001278">
    <property type="entry name" value="Arg-tRNA-ligase"/>
</dbReference>
<dbReference type="InterPro" id="IPR005148">
    <property type="entry name" value="Arg-tRNA-synth_N"/>
</dbReference>
<dbReference type="InterPro" id="IPR036695">
    <property type="entry name" value="Arg-tRNA-synth_N_sf"/>
</dbReference>
<dbReference type="InterPro" id="IPR035684">
    <property type="entry name" value="ArgRS_core"/>
</dbReference>
<dbReference type="InterPro" id="IPR008909">
    <property type="entry name" value="DALR_anticod-bd"/>
</dbReference>
<dbReference type="InterPro" id="IPR014729">
    <property type="entry name" value="Rossmann-like_a/b/a_fold"/>
</dbReference>
<dbReference type="InterPro" id="IPR009080">
    <property type="entry name" value="tRNAsynth_Ia_anticodon-bd"/>
</dbReference>
<dbReference type="NCBIfam" id="TIGR00456">
    <property type="entry name" value="argS"/>
    <property type="match status" value="1"/>
</dbReference>
<dbReference type="PANTHER" id="PTHR11956:SF5">
    <property type="entry name" value="ARGININE--TRNA LIGASE, CYTOPLASMIC"/>
    <property type="match status" value="1"/>
</dbReference>
<dbReference type="PANTHER" id="PTHR11956">
    <property type="entry name" value="ARGINYL-TRNA SYNTHETASE"/>
    <property type="match status" value="1"/>
</dbReference>
<dbReference type="Pfam" id="PF03485">
    <property type="entry name" value="Arg_tRNA_synt_N"/>
    <property type="match status" value="1"/>
</dbReference>
<dbReference type="Pfam" id="PF05746">
    <property type="entry name" value="DALR_1"/>
    <property type="match status" value="1"/>
</dbReference>
<dbReference type="Pfam" id="PF00750">
    <property type="entry name" value="tRNA-synt_1d"/>
    <property type="match status" value="1"/>
</dbReference>
<dbReference type="PRINTS" id="PR01038">
    <property type="entry name" value="TRNASYNTHARG"/>
</dbReference>
<dbReference type="SMART" id="SM01016">
    <property type="entry name" value="Arg_tRNA_synt_N"/>
    <property type="match status" value="1"/>
</dbReference>
<dbReference type="SMART" id="SM00836">
    <property type="entry name" value="DALR_1"/>
    <property type="match status" value="1"/>
</dbReference>
<dbReference type="SUPFAM" id="SSF47323">
    <property type="entry name" value="Anticodon-binding domain of a subclass of class I aminoacyl-tRNA synthetases"/>
    <property type="match status" value="1"/>
</dbReference>
<dbReference type="SUPFAM" id="SSF55190">
    <property type="entry name" value="Arginyl-tRNA synthetase (ArgRS), N-terminal 'additional' domain"/>
    <property type="match status" value="1"/>
</dbReference>
<dbReference type="SUPFAM" id="SSF52374">
    <property type="entry name" value="Nucleotidylyl transferase"/>
    <property type="match status" value="1"/>
</dbReference>
<organism>
    <name type="scientific">Streptococcus pneumoniae (strain Hungary19A-6)</name>
    <dbReference type="NCBI Taxonomy" id="487214"/>
    <lineage>
        <taxon>Bacteria</taxon>
        <taxon>Bacillati</taxon>
        <taxon>Bacillota</taxon>
        <taxon>Bacilli</taxon>
        <taxon>Lactobacillales</taxon>
        <taxon>Streptococcaceae</taxon>
        <taxon>Streptococcus</taxon>
    </lineage>
</organism>
<comment type="catalytic activity">
    <reaction evidence="1">
        <text>tRNA(Arg) + L-arginine + ATP = L-arginyl-tRNA(Arg) + AMP + diphosphate</text>
        <dbReference type="Rhea" id="RHEA:20301"/>
        <dbReference type="Rhea" id="RHEA-COMP:9658"/>
        <dbReference type="Rhea" id="RHEA-COMP:9673"/>
        <dbReference type="ChEBI" id="CHEBI:30616"/>
        <dbReference type="ChEBI" id="CHEBI:32682"/>
        <dbReference type="ChEBI" id="CHEBI:33019"/>
        <dbReference type="ChEBI" id="CHEBI:78442"/>
        <dbReference type="ChEBI" id="CHEBI:78513"/>
        <dbReference type="ChEBI" id="CHEBI:456215"/>
        <dbReference type="EC" id="6.1.1.19"/>
    </reaction>
</comment>
<comment type="subunit">
    <text evidence="1">Monomer.</text>
</comment>
<comment type="subcellular location">
    <subcellularLocation>
        <location evidence="1">Cytoplasm</location>
    </subcellularLocation>
</comment>
<comment type="similarity">
    <text evidence="1">Belongs to the class-I aminoacyl-tRNA synthetase family.</text>
</comment>
<gene>
    <name evidence="1" type="primary">argS</name>
    <name type="ordered locus">SPH_2266</name>
</gene>
<name>SYR_STRPI</name>
<accession>B1I9E7</accession>
<evidence type="ECO:0000255" key="1">
    <source>
        <dbReference type="HAMAP-Rule" id="MF_00123"/>
    </source>
</evidence>
<reference key="1">
    <citation type="journal article" date="2010" name="Genome Biol.">
        <title>Structure and dynamics of the pan-genome of Streptococcus pneumoniae and closely related species.</title>
        <authorList>
            <person name="Donati C."/>
            <person name="Hiller N.L."/>
            <person name="Tettelin H."/>
            <person name="Muzzi A."/>
            <person name="Croucher N.J."/>
            <person name="Angiuoli S.V."/>
            <person name="Oggioni M."/>
            <person name="Dunning Hotopp J.C."/>
            <person name="Hu F.Z."/>
            <person name="Riley D.R."/>
            <person name="Covacci A."/>
            <person name="Mitchell T.J."/>
            <person name="Bentley S.D."/>
            <person name="Kilian M."/>
            <person name="Ehrlich G.D."/>
            <person name="Rappuoli R."/>
            <person name="Moxon E.R."/>
            <person name="Masignani V."/>
        </authorList>
    </citation>
    <scope>NUCLEOTIDE SEQUENCE [LARGE SCALE GENOMIC DNA]</scope>
    <source>
        <strain>Hungary19A-6</strain>
    </source>
</reference>
<feature type="chain" id="PRO_1000095412" description="Arginine--tRNA ligase">
    <location>
        <begin position="1"/>
        <end position="563"/>
    </location>
</feature>
<feature type="short sequence motif" description="'HIGH' region">
    <location>
        <begin position="121"/>
        <end position="131"/>
    </location>
</feature>